<reference key="1">
    <citation type="submission" date="2008-03" db="EMBL/GenBank/DDBJ databases">
        <title>Complete sequence of Thermoproteus neutrophilus V24Sta.</title>
        <authorList>
            <consortium name="US DOE Joint Genome Institute"/>
            <person name="Copeland A."/>
            <person name="Lucas S."/>
            <person name="Lapidus A."/>
            <person name="Glavina del Rio T."/>
            <person name="Dalin E."/>
            <person name="Tice H."/>
            <person name="Bruce D."/>
            <person name="Goodwin L."/>
            <person name="Pitluck S."/>
            <person name="Sims D."/>
            <person name="Brettin T."/>
            <person name="Detter J.C."/>
            <person name="Han C."/>
            <person name="Kuske C.R."/>
            <person name="Schmutz J."/>
            <person name="Larimer F."/>
            <person name="Land M."/>
            <person name="Hauser L."/>
            <person name="Kyrpides N."/>
            <person name="Mikhailova N."/>
            <person name="Biddle J.F."/>
            <person name="Zhang Z."/>
            <person name="Fitz-Gibbon S.T."/>
            <person name="Lowe T.M."/>
            <person name="Saltikov C."/>
            <person name="House C.H."/>
            <person name="Richardson P."/>
        </authorList>
    </citation>
    <scope>NUCLEOTIDE SEQUENCE [LARGE SCALE GENOMIC DNA]</scope>
    <source>
        <strain>DSM 2338 / JCM 9278 / NBRC 100436 / V24Sta</strain>
    </source>
</reference>
<accession>B1YAS9</accession>
<sequence>MSELSRFFIELGERWQRRWREARVFEPEPAPGVPKYFITAAYPYPNGAIHIGHGRTYLVADVMARFQRHLGRSVLFPMGFHYTGTPILTIAEVIAAGDKAVMEEYMELYGVPEEEIKKMGDPLYLARYFHGQSKRAMERFGLSIDWTREFTTIDPEYQRFIQWQFEKLRKKGLIVRGRHPVGWCPRHSMPVGAHDTKDDKEPDIGQWTLVYFTDSEGLTFPTATLRPETVLGVTNLWINPDAEYVVAEFDGRRAVVSRDAAYRLSFQVGVKILREARGREFVGRMVQNPVTGEWVPVYEARFVDPKVGTGVVMSVPAHAPYDYAALRDLGTVKLIPLIRVEGYGDYPAKEVVERMGIKSQADPALEDATKEVYSAEYARGVMREDVAERVGAHLEEPARSMLRAVFKMYFAGRPVREAREFIARWLTEARLGGVMYDIMNKPVYCRCGTEIVVKVLEDQWFINYGESRWKEAARELVKEMSIVPGEARAQFLATIDWLDKRACARTRGLGTPLPWSSGWVIESLSDSTIYMAFYTVVKRIRQFGIRPEQLTEEFWDFVFLGQGSADEVSKKTGVPVEALKAIREEFEYWYPLDSRNSGKDLIPNHLTFFIFNHVAIFPREKWPRQIVANGWVLREGEKMSKSKRNVLPLDRAVEMYGPDPLRATLALAAEVEQDLDFRDAEARRNAQQLMSIYTLAQRLVQGAEERPPTWVDQWLVAEISRVLERAREAYEKVRVRQAAVEVLYNAKAVFDQYLAMVEKPSRQAVEAAKAWAVAMEPLVPHLAEELWATLGGAGFAALAPWPKLRAEPAALLAKRYVDMLIEDVKNIPAFGQGAKRVVIYVNRSFAWVKAALAGDVKTVIGAGVPPQQAKKVVDLVKTLGDEMRGLIAAVDHFDELEALRSYRNYVEKALGAPVEIYGADDPAAPDLGGKKRVALPLKPGIYVEK</sequence>
<name>SYL_PYRNV</name>
<dbReference type="EC" id="6.1.1.4" evidence="1"/>
<dbReference type="EMBL" id="CP001014">
    <property type="protein sequence ID" value="ACB39158.1"/>
    <property type="molecule type" value="Genomic_DNA"/>
</dbReference>
<dbReference type="RefSeq" id="WP_012349579.1">
    <property type="nucleotide sequence ID" value="NC_010525.1"/>
</dbReference>
<dbReference type="SMR" id="B1YAS9"/>
<dbReference type="STRING" id="444157.Tneu_0203"/>
<dbReference type="GeneID" id="6165044"/>
<dbReference type="KEGG" id="tne:Tneu_0203"/>
<dbReference type="eggNOG" id="arCOG00809">
    <property type="taxonomic scope" value="Archaea"/>
</dbReference>
<dbReference type="HOGENOM" id="CLU_004174_0_0_2"/>
<dbReference type="OrthoDB" id="23906at2157"/>
<dbReference type="Proteomes" id="UP000001694">
    <property type="component" value="Chromosome"/>
</dbReference>
<dbReference type="GO" id="GO:0005737">
    <property type="term" value="C:cytoplasm"/>
    <property type="evidence" value="ECO:0007669"/>
    <property type="project" value="UniProtKB-SubCell"/>
</dbReference>
<dbReference type="GO" id="GO:0002161">
    <property type="term" value="F:aminoacyl-tRNA deacylase activity"/>
    <property type="evidence" value="ECO:0007669"/>
    <property type="project" value="InterPro"/>
</dbReference>
<dbReference type="GO" id="GO:0005524">
    <property type="term" value="F:ATP binding"/>
    <property type="evidence" value="ECO:0007669"/>
    <property type="project" value="UniProtKB-UniRule"/>
</dbReference>
<dbReference type="GO" id="GO:0004823">
    <property type="term" value="F:leucine-tRNA ligase activity"/>
    <property type="evidence" value="ECO:0007669"/>
    <property type="project" value="UniProtKB-UniRule"/>
</dbReference>
<dbReference type="GO" id="GO:0006429">
    <property type="term" value="P:leucyl-tRNA aminoacylation"/>
    <property type="evidence" value="ECO:0007669"/>
    <property type="project" value="UniProtKB-UniRule"/>
</dbReference>
<dbReference type="CDD" id="cd00812">
    <property type="entry name" value="LeuRS_core"/>
    <property type="match status" value="1"/>
</dbReference>
<dbReference type="Gene3D" id="3.30.2320.20">
    <property type="entry name" value="Class I aminoacyl-tRNA synthetases (RS)"/>
    <property type="match status" value="1"/>
</dbReference>
<dbReference type="Gene3D" id="3.40.50.620">
    <property type="entry name" value="HUPs"/>
    <property type="match status" value="1"/>
</dbReference>
<dbReference type="Gene3D" id="1.10.730.10">
    <property type="entry name" value="Isoleucyl-tRNA Synthetase, Domain 1"/>
    <property type="match status" value="1"/>
</dbReference>
<dbReference type="Gene3D" id="1.10.10.720">
    <property type="entry name" value="leucyl-tRNA synthetase"/>
    <property type="match status" value="1"/>
</dbReference>
<dbReference type="Gene3D" id="3.90.740.10">
    <property type="entry name" value="Valyl/Leucyl/Isoleucyl-tRNA synthetase, editing domain"/>
    <property type="match status" value="1"/>
</dbReference>
<dbReference type="HAMAP" id="MF_00049_A">
    <property type="entry name" value="Leu_tRNA_synth_A"/>
    <property type="match status" value="1"/>
</dbReference>
<dbReference type="InterPro" id="IPR001412">
    <property type="entry name" value="aa-tRNA-synth_I_CS"/>
</dbReference>
<dbReference type="InterPro" id="IPR002300">
    <property type="entry name" value="aa-tRNA-synth_Ia"/>
</dbReference>
<dbReference type="InterPro" id="IPR020791">
    <property type="entry name" value="Leu-tRNA-lgase_arc"/>
</dbReference>
<dbReference type="InterPro" id="IPR004493">
    <property type="entry name" value="Leu-tRNA-synth_Ia_arc/euk"/>
</dbReference>
<dbReference type="InterPro" id="IPR013155">
    <property type="entry name" value="M/V/L/I-tRNA-synth_anticd-bd"/>
</dbReference>
<dbReference type="InterPro" id="IPR014729">
    <property type="entry name" value="Rossmann-like_a/b/a_fold"/>
</dbReference>
<dbReference type="InterPro" id="IPR009080">
    <property type="entry name" value="tRNAsynth_Ia_anticodon-bd"/>
</dbReference>
<dbReference type="InterPro" id="IPR009008">
    <property type="entry name" value="Val/Leu/Ile-tRNA-synth_edit"/>
</dbReference>
<dbReference type="NCBIfam" id="TIGR00395">
    <property type="entry name" value="leuS_arch"/>
    <property type="match status" value="1"/>
</dbReference>
<dbReference type="NCBIfam" id="NF008957">
    <property type="entry name" value="PRK12300.1"/>
    <property type="match status" value="1"/>
</dbReference>
<dbReference type="PANTHER" id="PTHR45794:SF1">
    <property type="entry name" value="LEUCINE--TRNA LIGASE, CYTOPLASMIC"/>
    <property type="match status" value="1"/>
</dbReference>
<dbReference type="PANTHER" id="PTHR45794">
    <property type="entry name" value="LEUCYL-TRNA SYNTHETASE"/>
    <property type="match status" value="1"/>
</dbReference>
<dbReference type="Pfam" id="PF08264">
    <property type="entry name" value="Anticodon_1"/>
    <property type="match status" value="1"/>
</dbReference>
<dbReference type="Pfam" id="PF00133">
    <property type="entry name" value="tRNA-synt_1"/>
    <property type="match status" value="1"/>
</dbReference>
<dbReference type="SUPFAM" id="SSF47323">
    <property type="entry name" value="Anticodon-binding domain of a subclass of class I aminoacyl-tRNA synthetases"/>
    <property type="match status" value="1"/>
</dbReference>
<dbReference type="SUPFAM" id="SSF52374">
    <property type="entry name" value="Nucleotidylyl transferase"/>
    <property type="match status" value="1"/>
</dbReference>
<dbReference type="SUPFAM" id="SSF50677">
    <property type="entry name" value="ValRS/IleRS/LeuRS editing domain"/>
    <property type="match status" value="1"/>
</dbReference>
<dbReference type="PROSITE" id="PS00178">
    <property type="entry name" value="AA_TRNA_LIGASE_I"/>
    <property type="match status" value="1"/>
</dbReference>
<gene>
    <name evidence="1" type="primary">leuS</name>
    <name type="ordered locus">Tneu_0203</name>
</gene>
<feature type="chain" id="PRO_1000091375" description="Leucine--tRNA ligase">
    <location>
        <begin position="1"/>
        <end position="945"/>
    </location>
</feature>
<feature type="short sequence motif" description="'HIGH' region">
    <location>
        <begin position="43"/>
        <end position="53"/>
    </location>
</feature>
<feature type="short sequence motif" description="'KMSKS' region">
    <location>
        <begin position="638"/>
        <end position="642"/>
    </location>
</feature>
<feature type="binding site" evidence="1">
    <location>
        <position position="641"/>
    </location>
    <ligand>
        <name>ATP</name>
        <dbReference type="ChEBI" id="CHEBI:30616"/>
    </ligand>
</feature>
<comment type="catalytic activity">
    <reaction evidence="1">
        <text>tRNA(Leu) + L-leucine + ATP = L-leucyl-tRNA(Leu) + AMP + diphosphate</text>
        <dbReference type="Rhea" id="RHEA:11688"/>
        <dbReference type="Rhea" id="RHEA-COMP:9613"/>
        <dbReference type="Rhea" id="RHEA-COMP:9622"/>
        <dbReference type="ChEBI" id="CHEBI:30616"/>
        <dbReference type="ChEBI" id="CHEBI:33019"/>
        <dbReference type="ChEBI" id="CHEBI:57427"/>
        <dbReference type="ChEBI" id="CHEBI:78442"/>
        <dbReference type="ChEBI" id="CHEBI:78494"/>
        <dbReference type="ChEBI" id="CHEBI:456215"/>
        <dbReference type="EC" id="6.1.1.4"/>
    </reaction>
</comment>
<comment type="subcellular location">
    <subcellularLocation>
        <location evidence="1">Cytoplasm</location>
    </subcellularLocation>
</comment>
<comment type="similarity">
    <text evidence="1">Belongs to the class-I aminoacyl-tRNA synthetase family.</text>
</comment>
<proteinExistence type="inferred from homology"/>
<protein>
    <recommendedName>
        <fullName evidence="1">Leucine--tRNA ligase</fullName>
        <ecNumber evidence="1">6.1.1.4</ecNumber>
    </recommendedName>
    <alternativeName>
        <fullName evidence="1">Leucyl-tRNA synthetase</fullName>
        <shortName evidence="1">LeuRS</shortName>
    </alternativeName>
</protein>
<keyword id="KW-0030">Aminoacyl-tRNA synthetase</keyword>
<keyword id="KW-0067">ATP-binding</keyword>
<keyword id="KW-0963">Cytoplasm</keyword>
<keyword id="KW-0436">Ligase</keyword>
<keyword id="KW-0547">Nucleotide-binding</keyword>
<keyword id="KW-0648">Protein biosynthesis</keyword>
<organism>
    <name type="scientific">Pyrobaculum neutrophilum (strain DSM 2338 / JCM 9278 / NBRC 100436 / V24Sta)</name>
    <name type="common">Thermoproteus neutrophilus</name>
    <dbReference type="NCBI Taxonomy" id="444157"/>
    <lineage>
        <taxon>Archaea</taxon>
        <taxon>Thermoproteota</taxon>
        <taxon>Thermoprotei</taxon>
        <taxon>Thermoproteales</taxon>
        <taxon>Thermoproteaceae</taxon>
        <taxon>Pyrobaculum</taxon>
    </lineage>
</organism>
<evidence type="ECO:0000255" key="1">
    <source>
        <dbReference type="HAMAP-Rule" id="MF_00049"/>
    </source>
</evidence>